<gene>
    <name type="primary">chiA</name>
    <name type="ordered locus">Fjoh_4555</name>
</gene>
<comment type="function">
    <text evidence="3">Major extracellular chitinase, which is essential for chitin utilization.</text>
</comment>
<comment type="catalytic activity">
    <reaction evidence="3">
        <text>Random endo-hydrolysis of N-acetyl-beta-D-glucosaminide (1-&gt;4)-beta-linkages in chitin and chitodextrins.</text>
        <dbReference type="EC" id="3.2.1.14"/>
    </reaction>
</comment>
<comment type="subcellular location">
    <subcellularLocation>
        <location evidence="3">Secreted</location>
    </subcellularLocation>
    <text>Translocated across the cytoplasmic membrane via the Sec system, and across the outer membrane via the type IX secretion system (T9SS).</text>
</comment>
<comment type="domain">
    <text evidence="3">The C-terminal region (CTD) is necessary and sufficient for secretion by the T9SS. The CTD may be cleaved during secretion.</text>
</comment>
<comment type="disruption phenotype">
    <text evidence="3">Disruption results in cells that fail to digest chitin.</text>
</comment>
<comment type="miscellaneous">
    <text evidence="5">Western blot and liquid chromatography-tandem mass spectrometry (LC-MS/MS) analyses suggest that ChiA could be proteolytically processed into two GH18 domain-containing proteins. However, it could be the result of non-specific digestion (PubMed:24363341).</text>
</comment>
<comment type="similarity">
    <text evidence="4">Belongs to the glycosyl hydrolase 18 family. Chitinase class II subfamily.</text>
</comment>
<reference key="1">
    <citation type="journal article" date="2009" name="Appl. Environ. Microbiol.">
        <title>Novel features of the polysaccharide-digesting gliding bacterium Flavobacterium johnsoniae as revealed by genome sequence analysis.</title>
        <authorList>
            <person name="McBride M.J."/>
            <person name="Xie G."/>
            <person name="Martens E.C."/>
            <person name="Lapidus A."/>
            <person name="Henrissat B."/>
            <person name="Rhodes R.G."/>
            <person name="Goltsman E."/>
            <person name="Wang W."/>
            <person name="Xu J."/>
            <person name="Hunnicutt D.W."/>
            <person name="Staroscik A.M."/>
            <person name="Hoover T.R."/>
            <person name="Cheng Y.Q."/>
            <person name="Stein J.L."/>
        </authorList>
    </citation>
    <scope>NUCLEOTIDE SEQUENCE [LARGE SCALE GENOMIC DNA]</scope>
    <source>
        <strain>ATCC 17061 / DSM 2064 / JCM 8514 / BCRC 14874 / CCUG 350202 / NBRC 14942 / NCIMB 11054 / UW101</strain>
    </source>
</reference>
<reference key="2">
    <citation type="journal article" date="2014" name="J. Bacteriol.">
        <title>Flavobacterium johnsoniae chitinase ChiA is required for chitin utilization and is secreted by the type IX secretion system.</title>
        <authorList>
            <person name="Kharade S.S."/>
            <person name="McBride M.J."/>
        </authorList>
    </citation>
    <scope>FUNCTION</scope>
    <scope>CATALYTIC ACTIVITY</scope>
    <scope>SUBCELLULAR LOCATION</scope>
    <scope>DOMAIN</scope>
    <scope>DISRUPTION PHENOTYPE</scope>
    <scope>GENE NAME</scope>
    <source>
        <strain>ATCC 17061 / DSM 2064 / JCM 8514 / BCRC 14874 / CCUG 350202 / NBRC 14942 / NCIMB 11054 / UW101</strain>
    </source>
</reference>
<evidence type="ECO:0000255" key="1"/>
<evidence type="ECO:0000255" key="2">
    <source>
        <dbReference type="PROSITE-ProRule" id="PRU01258"/>
    </source>
</evidence>
<evidence type="ECO:0000269" key="3">
    <source>
    </source>
</evidence>
<evidence type="ECO:0000305" key="4"/>
<evidence type="ECO:0000305" key="5">
    <source>
    </source>
</evidence>
<keyword id="KW-0119">Carbohydrate metabolism</keyword>
<keyword id="KW-0146">Chitin degradation</keyword>
<keyword id="KW-0326">Glycosidase</keyword>
<keyword id="KW-0378">Hydrolase</keyword>
<keyword id="KW-0624">Polysaccharide degradation</keyword>
<keyword id="KW-0677">Repeat</keyword>
<keyword id="KW-0964">Secreted</keyword>
<keyword id="KW-0732">Signal</keyword>
<accession>A5FB63</accession>
<name>CHIA_FLAJ1</name>
<dbReference type="EC" id="3.2.1.14"/>
<dbReference type="EMBL" id="CP000685">
    <property type="protein sequence ID" value="ABQ07554.1"/>
    <property type="molecule type" value="Genomic_DNA"/>
</dbReference>
<dbReference type="RefSeq" id="WP_012026520.1">
    <property type="nucleotide sequence ID" value="NC_009441.1"/>
</dbReference>
<dbReference type="SASBDB" id="A5FB63"/>
<dbReference type="SMR" id="A5FB63"/>
<dbReference type="STRING" id="376686.Fjoh_4555"/>
<dbReference type="CAZy" id="GH18">
    <property type="family name" value="Glycoside Hydrolase Family 18"/>
</dbReference>
<dbReference type="KEGG" id="fjo:Fjoh_4555"/>
<dbReference type="eggNOG" id="COG3325">
    <property type="taxonomic scope" value="Bacteria"/>
</dbReference>
<dbReference type="eggNOG" id="COG3469">
    <property type="taxonomic scope" value="Bacteria"/>
</dbReference>
<dbReference type="HOGENOM" id="CLU_245202_0_0_10"/>
<dbReference type="OrthoDB" id="9775889at2"/>
<dbReference type="Proteomes" id="UP000006694">
    <property type="component" value="Chromosome"/>
</dbReference>
<dbReference type="GO" id="GO:0005576">
    <property type="term" value="C:extracellular region"/>
    <property type="evidence" value="ECO:0000314"/>
    <property type="project" value="UniProtKB"/>
</dbReference>
<dbReference type="GO" id="GO:0030246">
    <property type="term" value="F:carbohydrate binding"/>
    <property type="evidence" value="ECO:0007669"/>
    <property type="project" value="InterPro"/>
</dbReference>
<dbReference type="GO" id="GO:0008061">
    <property type="term" value="F:chitin binding"/>
    <property type="evidence" value="ECO:0007669"/>
    <property type="project" value="InterPro"/>
</dbReference>
<dbReference type="GO" id="GO:0004568">
    <property type="term" value="F:chitinase activity"/>
    <property type="evidence" value="ECO:0000314"/>
    <property type="project" value="UniProtKB"/>
</dbReference>
<dbReference type="GO" id="GO:0008843">
    <property type="term" value="F:endochitinase activity"/>
    <property type="evidence" value="ECO:0007669"/>
    <property type="project" value="UniProtKB-EC"/>
</dbReference>
<dbReference type="GO" id="GO:0006032">
    <property type="term" value="P:chitin catabolic process"/>
    <property type="evidence" value="ECO:0000314"/>
    <property type="project" value="UniProtKB"/>
</dbReference>
<dbReference type="GO" id="GO:0000272">
    <property type="term" value="P:polysaccharide catabolic process"/>
    <property type="evidence" value="ECO:0007669"/>
    <property type="project" value="UniProtKB-KW"/>
</dbReference>
<dbReference type="CDD" id="cd06548">
    <property type="entry name" value="GH18_chitinase"/>
    <property type="match status" value="1"/>
</dbReference>
<dbReference type="CDD" id="cd02871">
    <property type="entry name" value="GH18_chitinase_D-like"/>
    <property type="match status" value="1"/>
</dbReference>
<dbReference type="FunFam" id="3.20.20.80:FF:000241">
    <property type="entry name" value="Glycoside hydrolase"/>
    <property type="match status" value="1"/>
</dbReference>
<dbReference type="Gene3D" id="3.10.50.10">
    <property type="match status" value="1"/>
</dbReference>
<dbReference type="Gene3D" id="2.60.40.1120">
    <property type="entry name" value="Carboxypeptidase-like, regulatory domain"/>
    <property type="match status" value="3"/>
</dbReference>
<dbReference type="Gene3D" id="3.20.20.80">
    <property type="entry name" value="Glycosidases"/>
    <property type="match status" value="2"/>
</dbReference>
<dbReference type="Gene3D" id="2.60.40.10">
    <property type="entry name" value="Immunoglobulins"/>
    <property type="match status" value="2"/>
</dbReference>
<dbReference type="InterPro" id="IPR013784">
    <property type="entry name" value="Carb-bd-like_fold"/>
</dbReference>
<dbReference type="InterPro" id="IPR008969">
    <property type="entry name" value="CarboxyPept-like_regulatory"/>
</dbReference>
<dbReference type="InterPro" id="IPR011583">
    <property type="entry name" value="Chitinase_II/V-like_cat"/>
</dbReference>
<dbReference type="InterPro" id="IPR029070">
    <property type="entry name" value="Chitinase_insertion_sf"/>
</dbReference>
<dbReference type="InterPro" id="IPR001223">
    <property type="entry name" value="Glyco_hydro18_cat"/>
</dbReference>
<dbReference type="InterPro" id="IPR001579">
    <property type="entry name" value="Glyco_hydro_18_chit_AS"/>
</dbReference>
<dbReference type="InterPro" id="IPR017853">
    <property type="entry name" value="Glycoside_hydrolase_SF"/>
</dbReference>
<dbReference type="InterPro" id="IPR050314">
    <property type="entry name" value="Glycosyl_Hydrlase_18"/>
</dbReference>
<dbReference type="InterPro" id="IPR013783">
    <property type="entry name" value="Ig-like_fold"/>
</dbReference>
<dbReference type="NCBIfam" id="NF033708">
    <property type="entry name" value="T9SS_Cterm_ChiA"/>
    <property type="match status" value="1"/>
</dbReference>
<dbReference type="PANTHER" id="PTHR11177">
    <property type="entry name" value="CHITINASE"/>
    <property type="match status" value="1"/>
</dbReference>
<dbReference type="PANTHER" id="PTHR11177:SF317">
    <property type="entry name" value="CHITINASE 12-RELATED"/>
    <property type="match status" value="1"/>
</dbReference>
<dbReference type="Pfam" id="PF17957">
    <property type="entry name" value="Big_7"/>
    <property type="match status" value="2"/>
</dbReference>
<dbReference type="Pfam" id="PF13620">
    <property type="entry name" value="CarboxypepD_reg"/>
    <property type="match status" value="2"/>
</dbReference>
<dbReference type="Pfam" id="PF00704">
    <property type="entry name" value="Glyco_hydro_18"/>
    <property type="match status" value="2"/>
</dbReference>
<dbReference type="SMART" id="SM00636">
    <property type="entry name" value="Glyco_18"/>
    <property type="match status" value="1"/>
</dbReference>
<dbReference type="SUPFAM" id="SSF51445">
    <property type="entry name" value="(Trans)glycosidases"/>
    <property type="match status" value="2"/>
</dbReference>
<dbReference type="SUPFAM" id="SSF49464">
    <property type="entry name" value="Carboxypeptidase regulatory domain-like"/>
    <property type="match status" value="1"/>
</dbReference>
<dbReference type="SUPFAM" id="SSF54556">
    <property type="entry name" value="Chitinase insertion domain"/>
    <property type="match status" value="1"/>
</dbReference>
<dbReference type="SUPFAM" id="SSF49478">
    <property type="entry name" value="Cna protein B-type domain"/>
    <property type="match status" value="1"/>
</dbReference>
<dbReference type="SUPFAM" id="SSF49452">
    <property type="entry name" value="Starch-binding domain-like"/>
    <property type="match status" value="1"/>
</dbReference>
<dbReference type="PROSITE" id="PS01095">
    <property type="entry name" value="GH18_1"/>
    <property type="match status" value="2"/>
</dbReference>
<dbReference type="PROSITE" id="PS51910">
    <property type="entry name" value="GH18_2"/>
    <property type="match status" value="2"/>
</dbReference>
<proteinExistence type="evidence at protein level"/>
<organism>
    <name type="scientific">Flavobacterium johnsoniae (strain ATCC 17061 / DSM 2064 / JCM 8514 / BCRC 14874 / CCUG 350202 / NBRC 14942 / NCIMB 11054 / UW101)</name>
    <name type="common">Cytophaga johnsonae</name>
    <dbReference type="NCBI Taxonomy" id="376686"/>
    <lineage>
        <taxon>Bacteria</taxon>
        <taxon>Pseudomonadati</taxon>
        <taxon>Bacteroidota</taxon>
        <taxon>Flavobacteriia</taxon>
        <taxon>Flavobacteriales</taxon>
        <taxon>Flavobacteriaceae</taxon>
        <taxon>Flavobacterium</taxon>
    </lineage>
</organism>
<feature type="signal peptide" evidence="1">
    <location>
        <begin position="1"/>
        <end position="19"/>
    </location>
</feature>
<feature type="chain" id="PRO_5000243200" description="Chitinase ChiA">
    <location>
        <begin position="20"/>
        <end position="1578"/>
    </location>
</feature>
<feature type="domain" description="GH18 1" evidence="2">
    <location>
        <begin position="25"/>
        <end position="466"/>
    </location>
</feature>
<feature type="domain" description="CNA-B">
    <location>
        <begin position="485"/>
        <end position="536"/>
    </location>
</feature>
<feature type="domain" description="GH18 2" evidence="2">
    <location>
        <begin position="1142"/>
        <end position="1483"/>
    </location>
</feature>
<feature type="region of interest" description="GH18N">
    <location>
        <begin position="26"/>
        <end position="446"/>
    </location>
</feature>
<feature type="region of interest" description="GH18C">
    <location>
        <begin position="1142"/>
        <end position="1462"/>
    </location>
</feature>
<feature type="region of interest" description="CTD">
    <location>
        <begin position="1473"/>
        <end position="1578"/>
    </location>
</feature>
<feature type="active site" description="Proton donor" evidence="2">
    <location>
        <position position="162"/>
    </location>
</feature>
<feature type="active site" description="Proton donor" evidence="2">
    <location>
        <position position="1264"/>
    </location>
</feature>
<feature type="binding site" evidence="2">
    <location>
        <begin position="92"/>
        <end position="93"/>
    </location>
    <ligand>
        <name>chitin</name>
        <dbReference type="ChEBI" id="CHEBI:17029"/>
    </ligand>
</feature>
<feature type="binding site" evidence="2">
    <location>
        <begin position="119"/>
        <end position="122"/>
    </location>
    <ligand>
        <name>chitin</name>
        <dbReference type="ChEBI" id="CHEBI:17029"/>
    </ligand>
</feature>
<feature type="binding site" evidence="2">
    <location>
        <position position="163"/>
    </location>
    <ligand>
        <name>chitin</name>
        <dbReference type="ChEBI" id="CHEBI:17029"/>
    </ligand>
</feature>
<feature type="binding site" evidence="2">
    <location>
        <begin position="249"/>
        <end position="252"/>
    </location>
    <ligand>
        <name>chitin</name>
        <dbReference type="ChEBI" id="CHEBI:17029"/>
    </ligand>
</feature>
<feature type="binding site" evidence="2">
    <location>
        <position position="441"/>
    </location>
    <ligand>
        <name>chitin</name>
        <dbReference type="ChEBI" id="CHEBI:17029"/>
    </ligand>
</feature>
<sequence>MKHYYRLLFLLLFPLLASAQPAHGKKVVGYYAQWSIYARDFNVPKIDGSKLTHLNYSFYGTTYDPAHPENTKLKCLDTYADFEHMEGGIPWDAPVKGNFYDLMKLKQKYPHLKILISVGGWTKGQDLSPIAASPVARAALAADMANFIVTYPFIDGFDIDWEYPLSGGTDGTEIVNGMPVPPQKYSPDDNKNLVLLLKAMRQAMPNKLVTIAAGNNVRNVSKQYLGPNNRAQYGMTEDISTYCDYITYFGYDFGGNWYDKTCYNAPLYASGNPNDPLYGATQSESLDELTNQYLNVIGFPANKLIMGLPFYGKKFDNVAANSTNGLFVAAPRYIVPGCTNPQNPTGTWDGSGACEKSGSIEICDLVGNPVTNSHAYLDPNTMMVTPSAASAGWVRYFDNTTKVPYLYNSTLKQFISYEDKQSMDLKVQYIKSRNLAGGMIWELSQDTRGSIPNSLLNQVDTSFGSVVPGTVSISGSVKNGSALVTDVTVELRNASNAVIQTVVSANGNFAFNNLTSGQNYSLTALKATYTFTPVTLVNVTVNQTAVVINGTQPTYTVSGTVLDGSTPVSGVTVTAVSGSTTLTAVSNASGVYSIAGLTAGLNFTVTAAKSGFSYAPASTVYNAIDSNKTLNFTQGAPVVNYTVSGTVLNSTTPVSGVTVTASFTGGSYAAVTNASGTYSLSLPSGGNYTVTAALTGQTFTPASTVYSNLNANKTLNFTQDVVVSTSKISGTVKNGTNPVAGAKVELVLPWTDNTHNWKSVIATTDAQGKYSFDNSVVDGYTQVLSLKLNSWQNGEVAYYPNNLANFAVPANPTVYNFNTSSTAKSALAAAANLISGTVKNGTTPVAGAKVEIVLPWTDNTHNWKSVLATTDASGNYSFDNSVVAGYTQILSLKLNGWENGDVTYYPNNLANFAVPTTPTIYNFNRQAVVATKPVVTITAPTASAIAINLGSAINFVASVGLSAVDATTISSVVFSLDGQSLSTANSSGTYTAAWTPAANQFSLSHTLTVTATASNGTTDSKTYSFTLTCSGANCPNALPVITWNSPSNTTVYQNTFQVVPISVTAVDSDGTVSGVTITINGGTFNMTAGTNNTYTYNFTPSAYQDYPVVIKATDNKSGVTTLNNTIKIATVSTNRFIPLPSKIILGYAHSWENAGAPFLYFSQMVGSKFNVVDYSFVETVNRDGYTPILTTNDTRYLTNGVFNKQLLKNDIKSLRDSGVPVIVSIGGQNGHVVLDNVTQKNIFVNGLKAIIDEYQFDGVDIDFEGGSMNFNAGGLRDISYAGISAYPRLKNVVDAFKELKAYYGPGFLLTAAPETQYVQGGYTTYTDTFGSFLPIIQNLRNELDLLAVQLYNTGGENGLDGQYYGTAKKSNMVTALTDMVIKGYNIASTGMRFDGLPASKVLIALPACPSAAGSGYLTPTEGINAMHYLRTGTTFSGRTYTMQPGGPYPSLRGLMTWSVNWDASSCGNSSELSKAYAAYFASQTAAKTLVLDDISAKSNATIAYFKNNALSVTNENEDIAQVDVFNVLGQNLVSHRNVQNNKEVLLHNQSFSSKQLFLVVVTDKAGNKKSFKVMNFLN</sequence>
<protein>
    <recommendedName>
        <fullName>Chitinase ChiA</fullName>
        <ecNumber>3.2.1.14</ecNumber>
    </recommendedName>
</protein>